<gene>
    <name evidence="1" type="primary">tgt</name>
    <name type="ordered locus">Shew185_2807</name>
</gene>
<sequence>MKFELDTTDGRARRGRLIFDRGTVETPAFMPVGTYGTVKGMTPEEVRATGADILLGNTFHLWLRPGEEIMRKHGDLHDFMNWQRPILTDSGGFQVFSLGDIRKITEEGVHFRSPINGEKIFLDPEKSMQIQDALGSDVVMIFDECTPYPATEDEARKSMQMSLRWARRSRDEFDRLENPNSLFGIIQGGVYEDLRDESLKGLVDIGFDGYAVGGLAVGEPKADMHRILEHICPQIPADKPRYLMGVGKPEDLVEGVRRGVDMFDCVMPTRNARNGHLFTSEGVIKIRNARHRDDTSPLDTKCDCYTCKNYSRAYLYHLDRCNEILGARLNTIHNLRYYQMLMEGLRGAIETGTLDAFVADFYTSQGREVPELVN</sequence>
<dbReference type="EC" id="2.4.2.29" evidence="1"/>
<dbReference type="EMBL" id="CP000753">
    <property type="protein sequence ID" value="ABS08941.1"/>
    <property type="molecule type" value="Genomic_DNA"/>
</dbReference>
<dbReference type="RefSeq" id="WP_012089614.1">
    <property type="nucleotide sequence ID" value="NC_009665.1"/>
</dbReference>
<dbReference type="SMR" id="A6WQ52"/>
<dbReference type="KEGG" id="sbm:Shew185_2807"/>
<dbReference type="HOGENOM" id="CLU_022060_0_1_6"/>
<dbReference type="UniPathway" id="UPA00392"/>
<dbReference type="GO" id="GO:0005829">
    <property type="term" value="C:cytosol"/>
    <property type="evidence" value="ECO:0007669"/>
    <property type="project" value="TreeGrafter"/>
</dbReference>
<dbReference type="GO" id="GO:0046872">
    <property type="term" value="F:metal ion binding"/>
    <property type="evidence" value="ECO:0007669"/>
    <property type="project" value="UniProtKB-KW"/>
</dbReference>
<dbReference type="GO" id="GO:0008479">
    <property type="term" value="F:tRNA-guanosine(34) queuine transglycosylase activity"/>
    <property type="evidence" value="ECO:0007669"/>
    <property type="project" value="UniProtKB-UniRule"/>
</dbReference>
<dbReference type="GO" id="GO:0008616">
    <property type="term" value="P:queuosine biosynthetic process"/>
    <property type="evidence" value="ECO:0007669"/>
    <property type="project" value="UniProtKB-UniRule"/>
</dbReference>
<dbReference type="GO" id="GO:0002099">
    <property type="term" value="P:tRNA wobble guanine modification"/>
    <property type="evidence" value="ECO:0007669"/>
    <property type="project" value="TreeGrafter"/>
</dbReference>
<dbReference type="GO" id="GO:0101030">
    <property type="term" value="P:tRNA-guanine transglycosylation"/>
    <property type="evidence" value="ECO:0007669"/>
    <property type="project" value="InterPro"/>
</dbReference>
<dbReference type="FunFam" id="3.20.20.105:FF:000001">
    <property type="entry name" value="Queuine tRNA-ribosyltransferase"/>
    <property type="match status" value="1"/>
</dbReference>
<dbReference type="Gene3D" id="3.20.20.105">
    <property type="entry name" value="Queuine tRNA-ribosyltransferase-like"/>
    <property type="match status" value="1"/>
</dbReference>
<dbReference type="HAMAP" id="MF_00168">
    <property type="entry name" value="Q_tRNA_Tgt"/>
    <property type="match status" value="1"/>
</dbReference>
<dbReference type="InterPro" id="IPR050076">
    <property type="entry name" value="ArchSynthase1/Queuine_TRR"/>
</dbReference>
<dbReference type="InterPro" id="IPR004803">
    <property type="entry name" value="TGT"/>
</dbReference>
<dbReference type="InterPro" id="IPR036511">
    <property type="entry name" value="TGT-like_sf"/>
</dbReference>
<dbReference type="InterPro" id="IPR002616">
    <property type="entry name" value="tRNA_ribo_trans-like"/>
</dbReference>
<dbReference type="NCBIfam" id="TIGR00430">
    <property type="entry name" value="Q_tRNA_tgt"/>
    <property type="match status" value="1"/>
</dbReference>
<dbReference type="NCBIfam" id="TIGR00449">
    <property type="entry name" value="tgt_general"/>
    <property type="match status" value="1"/>
</dbReference>
<dbReference type="PANTHER" id="PTHR46499">
    <property type="entry name" value="QUEUINE TRNA-RIBOSYLTRANSFERASE"/>
    <property type="match status" value="1"/>
</dbReference>
<dbReference type="PANTHER" id="PTHR46499:SF1">
    <property type="entry name" value="QUEUINE TRNA-RIBOSYLTRANSFERASE"/>
    <property type="match status" value="1"/>
</dbReference>
<dbReference type="Pfam" id="PF01702">
    <property type="entry name" value="TGT"/>
    <property type="match status" value="1"/>
</dbReference>
<dbReference type="SUPFAM" id="SSF51713">
    <property type="entry name" value="tRNA-guanine transglycosylase"/>
    <property type="match status" value="1"/>
</dbReference>
<name>TGT_SHEB8</name>
<comment type="function">
    <text evidence="1">Catalyzes the base-exchange of a guanine (G) residue with the queuine precursor 7-aminomethyl-7-deazaguanine (PreQ1) at position 34 (anticodon wobble position) in tRNAs with GU(N) anticodons (tRNA-Asp, -Asn, -His and -Tyr). Catalysis occurs through a double-displacement mechanism. The nucleophile active site attacks the C1' of nucleotide 34 to detach the guanine base from the RNA, forming a covalent enzyme-RNA intermediate. The proton acceptor active site deprotonates the incoming PreQ1, allowing a nucleophilic attack on the C1' of the ribose to form the product. After dissociation, two additional enzymatic reactions on the tRNA convert PreQ1 to queuine (Q), resulting in the hypermodified nucleoside queuosine (7-(((4,5-cis-dihydroxy-2-cyclopenten-1-yl)amino)methyl)-7-deazaguanosine).</text>
</comment>
<comment type="catalytic activity">
    <reaction evidence="1">
        <text>7-aminomethyl-7-carbaguanine + guanosine(34) in tRNA = 7-aminomethyl-7-carbaguanosine(34) in tRNA + guanine</text>
        <dbReference type="Rhea" id="RHEA:24104"/>
        <dbReference type="Rhea" id="RHEA-COMP:10341"/>
        <dbReference type="Rhea" id="RHEA-COMP:10342"/>
        <dbReference type="ChEBI" id="CHEBI:16235"/>
        <dbReference type="ChEBI" id="CHEBI:58703"/>
        <dbReference type="ChEBI" id="CHEBI:74269"/>
        <dbReference type="ChEBI" id="CHEBI:82833"/>
        <dbReference type="EC" id="2.4.2.29"/>
    </reaction>
</comment>
<comment type="cofactor">
    <cofactor evidence="1">
        <name>Zn(2+)</name>
        <dbReference type="ChEBI" id="CHEBI:29105"/>
    </cofactor>
    <text evidence="1">Binds 1 zinc ion per subunit.</text>
</comment>
<comment type="pathway">
    <text evidence="1">tRNA modification; tRNA-queuosine biosynthesis.</text>
</comment>
<comment type="subunit">
    <text evidence="1">Homodimer. Within each dimer, one monomer is responsible for RNA recognition and catalysis, while the other monomer binds to the replacement base PreQ1.</text>
</comment>
<comment type="similarity">
    <text evidence="1">Belongs to the queuine tRNA-ribosyltransferase family.</text>
</comment>
<proteinExistence type="inferred from homology"/>
<keyword id="KW-0328">Glycosyltransferase</keyword>
<keyword id="KW-0479">Metal-binding</keyword>
<keyword id="KW-0671">Queuosine biosynthesis</keyword>
<keyword id="KW-0808">Transferase</keyword>
<keyword id="KW-0819">tRNA processing</keyword>
<keyword id="KW-0862">Zinc</keyword>
<evidence type="ECO:0000255" key="1">
    <source>
        <dbReference type="HAMAP-Rule" id="MF_00168"/>
    </source>
</evidence>
<organism>
    <name type="scientific">Shewanella baltica (strain OS185)</name>
    <dbReference type="NCBI Taxonomy" id="402882"/>
    <lineage>
        <taxon>Bacteria</taxon>
        <taxon>Pseudomonadati</taxon>
        <taxon>Pseudomonadota</taxon>
        <taxon>Gammaproteobacteria</taxon>
        <taxon>Alteromonadales</taxon>
        <taxon>Shewanellaceae</taxon>
        <taxon>Shewanella</taxon>
    </lineage>
</organism>
<protein>
    <recommendedName>
        <fullName evidence="1">Queuine tRNA-ribosyltransferase</fullName>
        <ecNumber evidence="1">2.4.2.29</ecNumber>
    </recommendedName>
    <alternativeName>
        <fullName evidence="1">Guanine insertion enzyme</fullName>
    </alternativeName>
    <alternativeName>
        <fullName evidence="1">tRNA-guanine transglycosylase</fullName>
    </alternativeName>
</protein>
<feature type="chain" id="PRO_1000016845" description="Queuine tRNA-ribosyltransferase">
    <location>
        <begin position="1"/>
        <end position="374"/>
    </location>
</feature>
<feature type="region of interest" description="RNA binding" evidence="1">
    <location>
        <begin position="245"/>
        <end position="251"/>
    </location>
</feature>
<feature type="region of interest" description="RNA binding; important for wobble base 34 recognition" evidence="1">
    <location>
        <begin position="269"/>
        <end position="273"/>
    </location>
</feature>
<feature type="active site" description="Proton acceptor" evidence="1">
    <location>
        <position position="89"/>
    </location>
</feature>
<feature type="active site" description="Nucleophile" evidence="1">
    <location>
        <position position="264"/>
    </location>
</feature>
<feature type="binding site" evidence="1">
    <location>
        <begin position="89"/>
        <end position="93"/>
    </location>
    <ligand>
        <name>substrate</name>
    </ligand>
</feature>
<feature type="binding site" evidence="1">
    <location>
        <position position="143"/>
    </location>
    <ligand>
        <name>substrate</name>
    </ligand>
</feature>
<feature type="binding site" evidence="1">
    <location>
        <position position="187"/>
    </location>
    <ligand>
        <name>substrate</name>
    </ligand>
</feature>
<feature type="binding site" evidence="1">
    <location>
        <position position="214"/>
    </location>
    <ligand>
        <name>substrate</name>
    </ligand>
</feature>
<feature type="binding site" evidence="1">
    <location>
        <position position="302"/>
    </location>
    <ligand>
        <name>Zn(2+)</name>
        <dbReference type="ChEBI" id="CHEBI:29105"/>
    </ligand>
</feature>
<feature type="binding site" evidence="1">
    <location>
        <position position="304"/>
    </location>
    <ligand>
        <name>Zn(2+)</name>
        <dbReference type="ChEBI" id="CHEBI:29105"/>
    </ligand>
</feature>
<feature type="binding site" evidence="1">
    <location>
        <position position="307"/>
    </location>
    <ligand>
        <name>Zn(2+)</name>
        <dbReference type="ChEBI" id="CHEBI:29105"/>
    </ligand>
</feature>
<feature type="binding site" evidence="1">
    <location>
        <position position="333"/>
    </location>
    <ligand>
        <name>Zn(2+)</name>
        <dbReference type="ChEBI" id="CHEBI:29105"/>
    </ligand>
</feature>
<accession>A6WQ52</accession>
<reference key="1">
    <citation type="submission" date="2007-07" db="EMBL/GenBank/DDBJ databases">
        <title>Complete sequence of chromosome of Shewanella baltica OS185.</title>
        <authorList>
            <consortium name="US DOE Joint Genome Institute"/>
            <person name="Copeland A."/>
            <person name="Lucas S."/>
            <person name="Lapidus A."/>
            <person name="Barry K."/>
            <person name="Glavina del Rio T."/>
            <person name="Dalin E."/>
            <person name="Tice H."/>
            <person name="Pitluck S."/>
            <person name="Sims D."/>
            <person name="Brettin T."/>
            <person name="Bruce D."/>
            <person name="Detter J.C."/>
            <person name="Han C."/>
            <person name="Schmutz J."/>
            <person name="Larimer F."/>
            <person name="Land M."/>
            <person name="Hauser L."/>
            <person name="Kyrpides N."/>
            <person name="Mikhailova N."/>
            <person name="Brettar I."/>
            <person name="Rodrigues J."/>
            <person name="Konstantinidis K."/>
            <person name="Tiedje J."/>
            <person name="Richardson P."/>
        </authorList>
    </citation>
    <scope>NUCLEOTIDE SEQUENCE [LARGE SCALE GENOMIC DNA]</scope>
    <source>
        <strain>OS185</strain>
    </source>
</reference>